<reference key="1">
    <citation type="journal article" date="2000" name="J. Virol.">
        <title>The genome of a very virulent Marek's disease virus.</title>
        <authorList>
            <person name="Tulman E.R."/>
            <person name="Afonso C.L."/>
            <person name="Lu Z."/>
            <person name="Zsak L."/>
            <person name="Rock D.L."/>
            <person name="Kutish G.F."/>
        </authorList>
    </citation>
    <scope>NUCLEOTIDE SEQUENCE [LARGE SCALE GENOMIC DNA]</scope>
</reference>
<protein>
    <recommendedName>
        <fullName evidence="1">Envelope glycoprotein H</fullName>
        <shortName evidence="1">gH</shortName>
    </recommendedName>
</protein>
<keyword id="KW-1169">Fusion of virus membrane with host cell membrane</keyword>
<keyword id="KW-1168">Fusion of virus membrane with host membrane</keyword>
<keyword id="KW-0325">Glycoprotein</keyword>
<keyword id="KW-1032">Host cell membrane</keyword>
<keyword id="KW-1039">Host endosome</keyword>
<keyword id="KW-1043">Host membrane</keyword>
<keyword id="KW-0472">Membrane</keyword>
<keyword id="KW-1185">Reference proteome</keyword>
<keyword id="KW-0730">Sialic acid</keyword>
<keyword id="KW-0732">Signal</keyword>
<keyword id="KW-0812">Transmembrane</keyword>
<keyword id="KW-1133">Transmembrane helix</keyword>
<keyword id="KW-0261">Viral envelope protein</keyword>
<keyword id="KW-1162">Viral penetration into host cytoplasm</keyword>
<keyword id="KW-0946">Virion</keyword>
<keyword id="KW-1160">Virus entry into host cell</keyword>
<evidence type="ECO:0000255" key="1">
    <source>
        <dbReference type="HAMAP-Rule" id="MF_04033"/>
    </source>
</evidence>
<evidence type="ECO:0000256" key="2">
    <source>
        <dbReference type="SAM" id="MobiDB-lite"/>
    </source>
</evidence>
<proteinExistence type="inferred from homology"/>
<feature type="signal peptide" evidence="1">
    <location>
        <begin position="1"/>
        <end position="18"/>
    </location>
</feature>
<feature type="chain" id="PRO_0000436653" description="Envelope glycoprotein H" evidence="1">
    <location>
        <begin position="19"/>
        <end position="813"/>
    </location>
</feature>
<feature type="topological domain" description="Virion surface" evidence="1">
    <location>
        <begin position="19"/>
        <end position="769"/>
    </location>
</feature>
<feature type="transmembrane region" description="Helical" evidence="1">
    <location>
        <begin position="770"/>
        <end position="790"/>
    </location>
</feature>
<feature type="topological domain" description="Intravirion" evidence="1">
    <location>
        <begin position="791"/>
        <end position="813"/>
    </location>
</feature>
<feature type="region of interest" description="Disordered" evidence="2">
    <location>
        <begin position="135"/>
        <end position="159"/>
    </location>
</feature>
<feature type="region of interest" description="Interaction with gL" evidence="1">
    <location>
        <begin position="212"/>
        <end position="273"/>
    </location>
</feature>
<feature type="compositionally biased region" description="Basic and acidic residues" evidence="2">
    <location>
        <begin position="137"/>
        <end position="147"/>
    </location>
</feature>
<feature type="glycosylation site" description="N-linked (GlcNAc...) asparagine; by host" evidence="1">
    <location>
        <position position="62"/>
    </location>
</feature>
<feature type="glycosylation site" description="N-linked (GlcNAc...) asparagine; by host" evidence="1">
    <location>
        <position position="116"/>
    </location>
</feature>
<feature type="glycosylation site" description="N-linked (GlcNAc...) asparagine; by host" evidence="1">
    <location>
        <position position="247"/>
    </location>
</feature>
<feature type="glycosylation site" description="N-linked (GlcNAc...) asparagine; by host" evidence="1">
    <location>
        <position position="279"/>
    </location>
</feature>
<feature type="glycosylation site" description="N-linked (GlcNAc...) asparagine; by host" evidence="1">
    <location>
        <position position="410"/>
    </location>
</feature>
<feature type="glycosylation site" description="N-linked (GlcNAc...) asparagine; by host" evidence="1">
    <location>
        <position position="434"/>
    </location>
</feature>
<feature type="glycosylation site" description="N-linked (GlcNAc...) asparagine; by host" evidence="1">
    <location>
        <position position="469"/>
    </location>
</feature>
<feature type="glycosylation site" description="N-linked (GlcNAc...) asparagine; by host" evidence="1">
    <location>
        <position position="576"/>
    </location>
</feature>
<feature type="glycosylation site" description="N-linked (GlcNAc...) asparagine; by host" evidence="1">
    <location>
        <position position="727"/>
    </location>
</feature>
<feature type="glycosylation site" description="N-linked (GlcNAc...) asparagine; by host" evidence="1">
    <location>
        <position position="750"/>
    </location>
</feature>
<dbReference type="EMBL" id="AF243438">
    <property type="protein sequence ID" value="AAG14214.1"/>
    <property type="molecule type" value="Genomic_DNA"/>
</dbReference>
<dbReference type="RefSeq" id="YP_001033950.1">
    <property type="nucleotide sequence ID" value="NC_002229.3"/>
</dbReference>
<dbReference type="SMR" id="Q9E6P6"/>
<dbReference type="GlyCosmos" id="Q9E6P6">
    <property type="glycosylation" value="10 sites, No reported glycans"/>
</dbReference>
<dbReference type="GeneID" id="4811495"/>
<dbReference type="KEGG" id="vg:4811495"/>
<dbReference type="Proteomes" id="UP000008072">
    <property type="component" value="Segment"/>
</dbReference>
<dbReference type="GO" id="GO:0044175">
    <property type="term" value="C:host cell endosome membrane"/>
    <property type="evidence" value="ECO:0007669"/>
    <property type="project" value="UniProtKB-SubCell"/>
</dbReference>
<dbReference type="GO" id="GO:0020002">
    <property type="term" value="C:host cell plasma membrane"/>
    <property type="evidence" value="ECO:0007669"/>
    <property type="project" value="UniProtKB-SubCell"/>
</dbReference>
<dbReference type="GO" id="GO:0016020">
    <property type="term" value="C:membrane"/>
    <property type="evidence" value="ECO:0007669"/>
    <property type="project" value="UniProtKB-KW"/>
</dbReference>
<dbReference type="GO" id="GO:0019031">
    <property type="term" value="C:viral envelope"/>
    <property type="evidence" value="ECO:0007669"/>
    <property type="project" value="UniProtKB-KW"/>
</dbReference>
<dbReference type="GO" id="GO:0055036">
    <property type="term" value="C:virion membrane"/>
    <property type="evidence" value="ECO:0007669"/>
    <property type="project" value="UniProtKB-SubCell"/>
</dbReference>
<dbReference type="GO" id="GO:0019064">
    <property type="term" value="P:fusion of virus membrane with host plasma membrane"/>
    <property type="evidence" value="ECO:0007669"/>
    <property type="project" value="UniProtKB-KW"/>
</dbReference>
<dbReference type="GO" id="GO:0046718">
    <property type="term" value="P:symbiont entry into host cell"/>
    <property type="evidence" value="ECO:0007669"/>
    <property type="project" value="UniProtKB-KW"/>
</dbReference>
<dbReference type="Gene3D" id="1.20.58.1340">
    <property type="match status" value="1"/>
</dbReference>
<dbReference type="Gene3D" id="3.30.500.50">
    <property type="match status" value="1"/>
</dbReference>
<dbReference type="Gene3D" id="2.60.40.3190">
    <property type="entry name" value="Herpesvirus glycoprotein H, C-terminal domain"/>
    <property type="match status" value="1"/>
</dbReference>
<dbReference type="HAMAP" id="MF_04033">
    <property type="entry name" value="HSV_GH"/>
    <property type="match status" value="1"/>
</dbReference>
<dbReference type="InterPro" id="IPR003493">
    <property type="entry name" value="Herpes_gH"/>
</dbReference>
<dbReference type="InterPro" id="IPR035305">
    <property type="entry name" value="Herpes_glycoH_C"/>
</dbReference>
<dbReference type="InterPro" id="IPR038172">
    <property type="entry name" value="Herpes_glycoH_C_sf"/>
</dbReference>
<dbReference type="Pfam" id="PF17488">
    <property type="entry name" value="Herpes_glycoH_C"/>
    <property type="match status" value="1"/>
</dbReference>
<dbReference type="Pfam" id="PF02489">
    <property type="entry name" value="Herpes_glycop_H"/>
    <property type="match status" value="2"/>
</dbReference>
<organismHost>
    <name type="scientific">Gallus gallus</name>
    <name type="common">Chicken</name>
    <dbReference type="NCBI Taxonomy" id="9031"/>
</organismHost>
<name>GH_GAHVM</name>
<sequence>MGLPGSIVFLIMIHAFCAKKTPTNTLPSLLSLLGITDLPSLRLNILSLDGSANNQGSWVRDNTTFVYIGASSPANGVLFYMPTSHVQQMTFYKRPVSKLLASNNLIKFLNTGSYINHSFMTAMPPYRRNVQIPSDRSGLKLDDKDDAQPTGTNPPTELKNLKPIDVVNPEHRFILTSELTGTYVKHVCFVDPMDMLIPVDYAHIRTIIFGSDGAEVIMKIGITFASITISMKSAPPVELILSERARNISLIWPALKPYEPVDKFTRRPYLIYLLGPHMNASDMEIKSYINMIESVEESSNYDFQIAQTHAQLFIFAATPISDINDIYCFRVVTTRLFMSLVASVRNAFQSGYISFDEIIKTEANIKMITETLSTFALHSNPGTYFLLSGMHLRNENADIIKSLIRKTIINASKNTASLSILQHLYVLRSAYAFNISQESGNLGEHVSSISLELIIALHEESVRDTIAWNTSARHALYYAFASIFQRPPNEWDASRTARKALLFASSMCTEEHIVATELVIQEMYIKINVKNSPVHILDVYTPCVTALRMDISEHHHRLYAMSDVILHPVIEKYLENDSRGIDAEEELETKAELVITKLKTPLMRRLTIYASEVVTCSDADILEATALLVLPISGLGSYVVTRQLGIRGIVYNVDGVDVNNQLYITYVRLPCTTTAGNIVPMVLPRPLGSDCPYCGCVLLRYSTNGNLRHTIYISSQDLQRELIAGGNSSIRYFNPTIAQIYGTSLLLYPNGTIVRILAFESERVTIISATYVATATAGASIAISIAIITVRMIINNFRYNYHRYKKLSLYDDL</sequence>
<comment type="function">
    <text evidence="1">The heterodimer glycoprotein H-glycoprotein L is required for the fusion of viral and plasma membranes leading to virus entry into the host cell. Following initial binding to host receptor, membrane fusion is mediated by the fusion machinery composed of gB and the heterodimer gH/gL. May also be involved in the fusion between the virion envelope and the outer nuclear membrane during virion morphogenesis.</text>
</comment>
<comment type="subunit">
    <text evidence="1">Interacts with glycoprotein L (gL); this interaction is necessary for the correct processing and cell surface expression of gH. The heterodimer gH/gL seems to interact with gB trimers during fusion.</text>
</comment>
<comment type="subcellular location">
    <subcellularLocation>
        <location evidence="1">Virion membrane</location>
        <topology evidence="1">Single-pass type I membrane protein</topology>
    </subcellularLocation>
    <subcellularLocation>
        <location evidence="1">Host cell membrane</location>
        <topology evidence="1">Single-pass type I membrane protein</topology>
    </subcellularLocation>
    <subcellularLocation>
        <location evidence="1">Host endosome membrane</location>
        <topology evidence="1">Single-pass type I membrane protein</topology>
    </subcellularLocation>
    <text evidence="1">During virion morphogenesis, this protein probably accumulates in the endosomes and trans-Golgi where secondary envelopment occurs. It is probably transported to the cell surface from where it is endocytosed and directed to the trans-Golgi network (TGN).</text>
</comment>
<comment type="PTM">
    <text evidence="1">N-glycosylated, O-glycosylated, and sialylated.</text>
</comment>
<comment type="similarity">
    <text evidence="1">Belongs to the herpesviridae glycoprotein H family.</text>
</comment>
<organism>
    <name type="scientific">Gallid herpesvirus 2 (strain Chicken/Md5/ATCC VR-987)</name>
    <name type="common">GaHV-2</name>
    <name type="synonym">Marek's disease herpesvirus type 1</name>
    <dbReference type="NCBI Taxonomy" id="10389"/>
    <lineage>
        <taxon>Viruses</taxon>
        <taxon>Duplodnaviria</taxon>
        <taxon>Heunggongvirae</taxon>
        <taxon>Peploviricota</taxon>
        <taxon>Herviviricetes</taxon>
        <taxon>Herpesvirales</taxon>
        <taxon>Orthoherpesviridae</taxon>
        <taxon>Alphaherpesvirinae</taxon>
        <taxon>Mardivirus</taxon>
        <taxon>Mardivirus gallidalpha2</taxon>
        <taxon>Gallid alphaherpesvirus 2</taxon>
    </lineage>
</organism>
<accession>Q9E6P6</accession>
<gene>
    <name evidence="1" type="primary">gH</name>
    <name type="ORF">MDV034</name>
</gene>